<name>SH3L1_BOVIN</name>
<accession>Q58DU7</accession>
<organism>
    <name type="scientific">Bos taurus</name>
    <name type="common">Bovine</name>
    <dbReference type="NCBI Taxonomy" id="9913"/>
    <lineage>
        <taxon>Eukaryota</taxon>
        <taxon>Metazoa</taxon>
        <taxon>Chordata</taxon>
        <taxon>Craniata</taxon>
        <taxon>Vertebrata</taxon>
        <taxon>Euteleostomi</taxon>
        <taxon>Mammalia</taxon>
        <taxon>Eutheria</taxon>
        <taxon>Laurasiatheria</taxon>
        <taxon>Artiodactyla</taxon>
        <taxon>Ruminantia</taxon>
        <taxon>Pecora</taxon>
        <taxon>Bovidae</taxon>
        <taxon>Bovinae</taxon>
        <taxon>Bos</taxon>
    </lineage>
</organism>
<sequence>MVIRVYIASSSGSMAIKKKQQDVLGFLEANKIGFEEKDIAANEENRKWMRENVPENSRPATGYPLPPQIFNESQYRGDYDAFFEARENNAVYAFLGLTAPPGSKEAEAQAKQQA</sequence>
<dbReference type="EMBL" id="BT021500">
    <property type="protein sequence ID" value="AAX46347.1"/>
    <property type="molecule type" value="mRNA"/>
</dbReference>
<dbReference type="EMBL" id="BC103122">
    <property type="protein sequence ID" value="AAI03123.1"/>
    <property type="molecule type" value="mRNA"/>
</dbReference>
<dbReference type="RefSeq" id="NP_001030517.1">
    <property type="nucleotide sequence ID" value="NM_001035440.2"/>
</dbReference>
<dbReference type="SMR" id="Q58DU7"/>
<dbReference type="FunCoup" id="Q58DU7">
    <property type="interactions" value="1543"/>
</dbReference>
<dbReference type="STRING" id="9913.ENSBTAP00000013990"/>
<dbReference type="PaxDb" id="9913-ENSBTAP00000013990"/>
<dbReference type="PeptideAtlas" id="Q58DU7"/>
<dbReference type="GeneID" id="614007"/>
<dbReference type="KEGG" id="bta:614007"/>
<dbReference type="CTD" id="6451"/>
<dbReference type="VEuPathDB" id="HostDB:ENSBTAG00000010587"/>
<dbReference type="eggNOG" id="KOG4023">
    <property type="taxonomic scope" value="Eukaryota"/>
</dbReference>
<dbReference type="HOGENOM" id="CLU_084862_3_0_1"/>
<dbReference type="InParanoid" id="Q58DU7"/>
<dbReference type="OMA" id="NEKEFMQ"/>
<dbReference type="OrthoDB" id="9932926at2759"/>
<dbReference type="Proteomes" id="UP000009136">
    <property type="component" value="Chromosome X"/>
</dbReference>
<dbReference type="Bgee" id="ENSBTAG00000010587">
    <property type="expression patterns" value="Expressed in myometrium and 105 other cell types or tissues"/>
</dbReference>
<dbReference type="GO" id="GO:0005737">
    <property type="term" value="C:cytoplasm"/>
    <property type="evidence" value="ECO:0000318"/>
    <property type="project" value="GO_Central"/>
</dbReference>
<dbReference type="GO" id="GO:0005829">
    <property type="term" value="C:cytosol"/>
    <property type="evidence" value="ECO:0007669"/>
    <property type="project" value="UniProtKB-SubCell"/>
</dbReference>
<dbReference type="GO" id="GO:0005886">
    <property type="term" value="C:plasma membrane"/>
    <property type="evidence" value="ECO:0007669"/>
    <property type="project" value="UniProtKB-SubCell"/>
</dbReference>
<dbReference type="GO" id="GO:0140517">
    <property type="term" value="F:protein-RNA adaptor activity"/>
    <property type="evidence" value="ECO:0007669"/>
    <property type="project" value="Ensembl"/>
</dbReference>
<dbReference type="GO" id="GO:0017124">
    <property type="term" value="F:SH3 domain binding"/>
    <property type="evidence" value="ECO:0007669"/>
    <property type="project" value="UniProtKB-KW"/>
</dbReference>
<dbReference type="GO" id="GO:1990756">
    <property type="term" value="F:ubiquitin-like ligase-substrate adaptor activity"/>
    <property type="evidence" value="ECO:0007669"/>
    <property type="project" value="Ensembl"/>
</dbReference>
<dbReference type="GO" id="GO:1904690">
    <property type="term" value="P:positive regulation of cytoplasmic translational initiation"/>
    <property type="evidence" value="ECO:0007669"/>
    <property type="project" value="Ensembl"/>
</dbReference>
<dbReference type="GO" id="GO:0043161">
    <property type="term" value="P:proteasome-mediated ubiquitin-dependent protein catabolic process"/>
    <property type="evidence" value="ECO:0007669"/>
    <property type="project" value="Ensembl"/>
</dbReference>
<dbReference type="CDD" id="cd03030">
    <property type="entry name" value="GRX_SH3BGR"/>
    <property type="match status" value="1"/>
</dbReference>
<dbReference type="FunFam" id="3.40.30.10:FF:000065">
    <property type="entry name" value="SH3 domain-binding glutamic acid-rich-like protein"/>
    <property type="match status" value="1"/>
</dbReference>
<dbReference type="Gene3D" id="3.40.30.10">
    <property type="entry name" value="Glutaredoxin"/>
    <property type="match status" value="1"/>
</dbReference>
<dbReference type="InterPro" id="IPR006993">
    <property type="entry name" value="Glut_rich_SH3-bd"/>
</dbReference>
<dbReference type="InterPro" id="IPR051033">
    <property type="entry name" value="SH3BGR"/>
</dbReference>
<dbReference type="InterPro" id="IPR036249">
    <property type="entry name" value="Thioredoxin-like_sf"/>
</dbReference>
<dbReference type="PANTHER" id="PTHR12232:SF5">
    <property type="entry name" value="ADAPTER SH3BGRL"/>
    <property type="match status" value="1"/>
</dbReference>
<dbReference type="PANTHER" id="PTHR12232">
    <property type="entry name" value="SH3 DOMAIN-BINDING GLUTAMIC ACID-RICH-LIKE PROTEIN"/>
    <property type="match status" value="1"/>
</dbReference>
<dbReference type="Pfam" id="PF04908">
    <property type="entry name" value="SH3BGR"/>
    <property type="match status" value="1"/>
</dbReference>
<dbReference type="PIRSF" id="PIRSF008142">
    <property type="entry name" value="SH3-bind_E-rich_L"/>
    <property type="match status" value="1"/>
</dbReference>
<dbReference type="SUPFAM" id="SSF52833">
    <property type="entry name" value="Thioredoxin-like"/>
    <property type="match status" value="1"/>
</dbReference>
<evidence type="ECO:0000250" key="1">
    <source>
        <dbReference type="UniProtKB" id="O75368"/>
    </source>
</evidence>
<evidence type="ECO:0000255" key="2"/>
<evidence type="ECO:0000305" key="3"/>
<keyword id="KW-1003">Cell membrane</keyword>
<keyword id="KW-0963">Cytoplasm</keyword>
<keyword id="KW-0472">Membrane</keyword>
<keyword id="KW-1185">Reference proteome</keyword>
<keyword id="KW-0729">SH3-binding</keyword>
<gene>
    <name type="primary">SH3BGRL</name>
</gene>
<feature type="chain" id="PRO_0000312641" description="Adapter SH3BGRL">
    <location>
        <begin position="1"/>
        <end position="114"/>
    </location>
</feature>
<feature type="region of interest" description="Required for interaction with HER2" evidence="1">
    <location>
        <begin position="13"/>
        <end position="50"/>
    </location>
</feature>
<feature type="region of interest" description="Required for interaction with PFN1, HER2, and ATG12" evidence="1">
    <location>
        <begin position="54"/>
        <end position="71"/>
    </location>
</feature>
<feature type="short sequence motif" description="SH3-binding" evidence="2">
    <location>
        <begin position="61"/>
        <end position="67"/>
    </location>
</feature>
<protein>
    <recommendedName>
        <fullName evidence="1">Adapter SH3BGRL</fullName>
    </recommendedName>
    <alternativeName>
        <fullName evidence="3">SH3 domain-binding glutamic acid-rich-like protein 1</fullName>
    </alternativeName>
</protein>
<comment type="function">
    <text evidence="1">Appears to function as an adapter protein that bridges proteins together or proteins with mRNAs. May function as a ubiquitin ligase-substrate adapter. Additionally, associates with translating cytoplasmic ribosomes and may promote the expression of specific mRNAs.</text>
</comment>
<comment type="subunit">
    <text evidence="1">Monomer. Interacts with PFN1/Profilin-1. Interacts with ERBB2. Interacts with ATG12. Interacts with BECN1. Interacts with translating ribosomes.</text>
</comment>
<comment type="subcellular location">
    <subcellularLocation>
        <location evidence="1">Cytoplasm</location>
        <location evidence="1">Cytosol</location>
    </subcellularLocation>
    <subcellularLocation>
        <location evidence="1">Cell membrane</location>
    </subcellularLocation>
</comment>
<comment type="domain">
    <text evidence="1">The SH3-binding domain is buried in the tertiary structure, and it therefore unclear whether it directly mediates protein-binding.</text>
</comment>
<comment type="similarity">
    <text evidence="3">Belongs to the SH3BGR family.</text>
</comment>
<reference key="1">
    <citation type="journal article" date="2005" name="BMC Genomics">
        <title>Characterization of 954 bovine full-CDS cDNA sequences.</title>
        <authorList>
            <person name="Harhay G.P."/>
            <person name="Sonstegard T.S."/>
            <person name="Keele J.W."/>
            <person name="Heaton M.P."/>
            <person name="Clawson M.L."/>
            <person name="Snelling W.M."/>
            <person name="Wiedmann R.T."/>
            <person name="Van Tassell C.P."/>
            <person name="Smith T.P.L."/>
        </authorList>
    </citation>
    <scope>NUCLEOTIDE SEQUENCE [LARGE SCALE MRNA]</scope>
</reference>
<reference key="2">
    <citation type="submission" date="2005-08" db="EMBL/GenBank/DDBJ databases">
        <authorList>
            <consortium name="NIH - Mammalian Gene Collection (MGC) project"/>
        </authorList>
    </citation>
    <scope>NUCLEOTIDE SEQUENCE [LARGE SCALE MRNA]</scope>
    <source>
        <strain>Hereford</strain>
        <tissue>Heart ventricle</tissue>
    </source>
</reference>
<proteinExistence type="inferred from homology"/>